<accession>Q9PL46</accession>
<keyword id="KW-0998">Cell outer membrane</keyword>
<keyword id="KW-0134">Cell wall</keyword>
<keyword id="KW-0472">Membrane</keyword>
<keyword id="KW-0964">Secreted</keyword>
<keyword id="KW-0732">Signal</keyword>
<keyword id="KW-0812">Transmembrane</keyword>
<keyword id="KW-1134">Transmembrane beta strand</keyword>
<feature type="signal peptide" evidence="1">
    <location>
        <begin position="1"/>
        <end position="20"/>
    </location>
</feature>
<feature type="chain" id="PRO_0000024726" description="Probable outer membrane protein PmpF">
    <location>
        <begin position="21"/>
        <end position="1025"/>
    </location>
</feature>
<feature type="domain" description="Autotransporter" evidence="2">
    <location>
        <begin position="748"/>
        <end position="1025"/>
    </location>
</feature>
<feature type="region of interest" description="Disordered" evidence="3">
    <location>
        <begin position="654"/>
        <end position="681"/>
    </location>
</feature>
<feature type="compositionally biased region" description="Polar residues" evidence="3">
    <location>
        <begin position="659"/>
        <end position="681"/>
    </location>
</feature>
<evidence type="ECO:0000255" key="1"/>
<evidence type="ECO:0000255" key="2">
    <source>
        <dbReference type="PROSITE-ProRule" id="PRU00556"/>
    </source>
</evidence>
<evidence type="ECO:0000256" key="3">
    <source>
        <dbReference type="SAM" id="MobiDB-lite"/>
    </source>
</evidence>
<evidence type="ECO:0000305" key="4"/>
<sequence length="1025" mass="111459">MTRRILPLSLVFIPLSCISASETDTLKLPNLTFGGREIEFIVTPPSSIAAQYITYANVSNYRGNFTISSCTQDQWFSRGLSTTNSSGAFVESMTSFTAIDNADLFFCNNYCTHQGGGGAINATGLISFKNNQNILFYNNTTIGTQFTGVALRTERNRGGALYGSSIELINNHSLNFINNTSGDMGGAVSTIQNLVIKNTSGIVAFENNHTTDHIPNTFATILARGGAVGCQGACEISHNTGPVVFNSNYGGYGGAISTGGQCIFRDNKDKLIFINNSALGWHNTSAQGNGAVISAGGEFGLLNNKGPIYFENNNASYIAGAISCNNLNFQENGPIYFLNNSALYGGAFHLFASPAANYIHTGSGDIIFNNNTELSTTGMSAGLRKLFYIPGTTNNNPITLSLGAKKDTRIYFYDLFQWGGLKKANTPPENSPHTVTINPSDEFSGAVVFSYKNISSDLQAHMIASKTHNQIKDSPTTLKFGTMSIENGAEFEFFNGPLTQESTSLLALGQDSILTVGKDASLTITHLGIILPGLLNDQGTTAPRIRVNPQDMTQNTNSNQAPVSTENVATQKIFFSGLVSLVDENYESVYDSCDLSRGKANQPILHIETTNDAQLSNDWKNTLNTSLYSLPHYGYQGLWTSNWMTTTRTVSLTNSTETQTANNSIQEQKNTSETFDSNSTTTAKIPSIRASTGGTTPLATTDVTVTRHSLVVSWTPIGYIADPARRGDLIANNLVSSGRNTTLYLRSLLPDDSWFALQGSAATLFTKQQKRLDYHGYSSASKGYAISSQASGAHGHKFLFSFSQSSDTMKEKRTNNKISSRYYLSALCFEQPMFDRIALIGAAAYNYGTHKTYNFYGTKKFSKGNFHSTTLGGSLRCELRDSMPFQSIMLTPFIQALISRTEPASIQEQGDLARLFSLKQPHTAVVSPIGIKGVYSSNKWPTVSCEMEVAYQPTLYWKRPILNTVLIKNNGSWETTNTPLAKHSFYGRGSSSLKFSYLKLFANYQAQVATSTVSHYMNAGGALVF</sequence>
<reference key="1">
    <citation type="journal article" date="2000" name="Nucleic Acids Res.">
        <title>Genome sequences of Chlamydia trachomatis MoPn and Chlamydia pneumoniae AR39.</title>
        <authorList>
            <person name="Read T.D."/>
            <person name="Brunham R.C."/>
            <person name="Shen C."/>
            <person name="Gill S.R."/>
            <person name="Heidelberg J.F."/>
            <person name="White O."/>
            <person name="Hickey E.K."/>
            <person name="Peterson J.D."/>
            <person name="Utterback T.R."/>
            <person name="Berry K.J."/>
            <person name="Bass S."/>
            <person name="Linher K.D."/>
            <person name="Weidman J.F."/>
            <person name="Khouri H.M."/>
            <person name="Craven B."/>
            <person name="Bowman C."/>
            <person name="Dodson R.J."/>
            <person name="Gwinn M.L."/>
            <person name="Nelson W.C."/>
            <person name="DeBoy R.T."/>
            <person name="Kolonay J.F."/>
            <person name="McClarty G."/>
            <person name="Salzberg S.L."/>
            <person name="Eisen J.A."/>
            <person name="Fraser C.M."/>
        </authorList>
    </citation>
    <scope>NUCLEOTIDE SEQUENCE [LARGE SCALE GENOMIC DNA]</scope>
    <source>
        <strain>MoPn / Nigg</strain>
    </source>
</reference>
<proteinExistence type="evidence at transcript level"/>
<protein>
    <recommendedName>
        <fullName>Probable outer membrane protein PmpF</fullName>
    </recommendedName>
    <alternativeName>
        <fullName>Polymorphic membrane protein F</fullName>
    </alternativeName>
</protein>
<dbReference type="EMBL" id="AE002160">
    <property type="protein sequence ID" value="AAF39131.1"/>
    <property type="molecule type" value="Genomic_DNA"/>
</dbReference>
<dbReference type="PIR" id="G81722">
    <property type="entry name" value="G81722"/>
</dbReference>
<dbReference type="RefSeq" id="WP_010229975.1">
    <property type="nucleotide sequence ID" value="NZ_CP027217.1"/>
</dbReference>
<dbReference type="GeneID" id="1246432"/>
<dbReference type="KEGG" id="cmu:TC_0262"/>
<dbReference type="eggNOG" id="COG3210">
    <property type="taxonomic scope" value="Bacteria"/>
</dbReference>
<dbReference type="HOGENOM" id="CLU_004549_2_0_0"/>
<dbReference type="OrthoDB" id="16673at2"/>
<dbReference type="Proteomes" id="UP000000800">
    <property type="component" value="Chromosome"/>
</dbReference>
<dbReference type="GO" id="GO:0009279">
    <property type="term" value="C:cell outer membrane"/>
    <property type="evidence" value="ECO:0007669"/>
    <property type="project" value="UniProtKB-SubCell"/>
</dbReference>
<dbReference type="GO" id="GO:0005576">
    <property type="term" value="C:extracellular region"/>
    <property type="evidence" value="ECO:0007669"/>
    <property type="project" value="UniProtKB-KW"/>
</dbReference>
<dbReference type="InterPro" id="IPR005546">
    <property type="entry name" value="Autotransporte_beta"/>
</dbReference>
<dbReference type="InterPro" id="IPR036709">
    <property type="entry name" value="Autotransporte_beta_dom_sf"/>
</dbReference>
<dbReference type="InterPro" id="IPR011427">
    <property type="entry name" value="Polymorphic_membr_middle"/>
</dbReference>
<dbReference type="InterPro" id="IPR003368">
    <property type="entry name" value="POMP_repeat"/>
</dbReference>
<dbReference type="NCBIfam" id="TIGR01376">
    <property type="entry name" value="POMP_repeat"/>
    <property type="match status" value="2"/>
</dbReference>
<dbReference type="Pfam" id="PF03797">
    <property type="entry name" value="Autotransporter"/>
    <property type="match status" value="1"/>
</dbReference>
<dbReference type="Pfam" id="PF07548">
    <property type="entry name" value="ChlamPMP_M"/>
    <property type="match status" value="1"/>
</dbReference>
<dbReference type="SMART" id="SM00869">
    <property type="entry name" value="Autotransporter"/>
    <property type="match status" value="1"/>
</dbReference>
<dbReference type="SUPFAM" id="SSF103515">
    <property type="entry name" value="Autotransporter"/>
    <property type="match status" value="1"/>
</dbReference>
<dbReference type="PROSITE" id="PS51208">
    <property type="entry name" value="AUTOTRANSPORTER"/>
    <property type="match status" value="1"/>
</dbReference>
<gene>
    <name type="primary">pmpF</name>
    <name type="ordered locus">TC_0262</name>
</gene>
<comment type="subcellular location">
    <subcellularLocation>
        <location>Secreted</location>
        <location>Cell wall</location>
    </subcellularLocation>
    <subcellularLocation>
        <location evidence="4">Cell outer membrane</location>
        <topology evidence="4">Peripheral membrane protein</topology>
        <orientation evidence="4">Extracellular side</orientation>
    </subcellularLocation>
</comment>
<comment type="developmental stage">
    <text>Elementary body.</text>
</comment>
<comment type="similarity">
    <text evidence="4">Belongs to the PMP outer membrane protein family.</text>
</comment>
<organism>
    <name type="scientific">Chlamydia muridarum (strain MoPn / Nigg)</name>
    <dbReference type="NCBI Taxonomy" id="243161"/>
    <lineage>
        <taxon>Bacteria</taxon>
        <taxon>Pseudomonadati</taxon>
        <taxon>Chlamydiota</taxon>
        <taxon>Chlamydiia</taxon>
        <taxon>Chlamydiales</taxon>
        <taxon>Chlamydiaceae</taxon>
        <taxon>Chlamydia/Chlamydophila group</taxon>
        <taxon>Chlamydia</taxon>
    </lineage>
</organism>
<name>PMPF_CHLMU</name>